<dbReference type="EC" id="2.4.99.17" evidence="1"/>
<dbReference type="EMBL" id="CP000148">
    <property type="protein sequence ID" value="ABB31093.1"/>
    <property type="molecule type" value="Genomic_DNA"/>
</dbReference>
<dbReference type="RefSeq" id="WP_004512996.1">
    <property type="nucleotide sequence ID" value="NC_007517.1"/>
</dbReference>
<dbReference type="SMR" id="Q39XD1"/>
<dbReference type="STRING" id="269799.Gmet_0851"/>
<dbReference type="KEGG" id="gme:Gmet_0851"/>
<dbReference type="eggNOG" id="COG0809">
    <property type="taxonomic scope" value="Bacteria"/>
</dbReference>
<dbReference type="HOGENOM" id="CLU_039110_1_1_7"/>
<dbReference type="UniPathway" id="UPA00392"/>
<dbReference type="Proteomes" id="UP000007073">
    <property type="component" value="Chromosome"/>
</dbReference>
<dbReference type="GO" id="GO:0005737">
    <property type="term" value="C:cytoplasm"/>
    <property type="evidence" value="ECO:0007669"/>
    <property type="project" value="UniProtKB-SubCell"/>
</dbReference>
<dbReference type="GO" id="GO:0051075">
    <property type="term" value="F:S-adenosylmethionine:tRNA ribosyltransferase-isomerase activity"/>
    <property type="evidence" value="ECO:0007669"/>
    <property type="project" value="UniProtKB-EC"/>
</dbReference>
<dbReference type="GO" id="GO:0008616">
    <property type="term" value="P:queuosine biosynthetic process"/>
    <property type="evidence" value="ECO:0007669"/>
    <property type="project" value="UniProtKB-UniRule"/>
</dbReference>
<dbReference type="GO" id="GO:0002099">
    <property type="term" value="P:tRNA wobble guanine modification"/>
    <property type="evidence" value="ECO:0007669"/>
    <property type="project" value="TreeGrafter"/>
</dbReference>
<dbReference type="FunFam" id="3.40.1780.10:FF:000001">
    <property type="entry name" value="S-adenosylmethionine:tRNA ribosyltransferase-isomerase"/>
    <property type="match status" value="1"/>
</dbReference>
<dbReference type="Gene3D" id="2.40.10.240">
    <property type="entry name" value="QueA-like"/>
    <property type="match status" value="1"/>
</dbReference>
<dbReference type="Gene3D" id="3.40.1780.10">
    <property type="entry name" value="QueA-like"/>
    <property type="match status" value="2"/>
</dbReference>
<dbReference type="HAMAP" id="MF_00113">
    <property type="entry name" value="QueA"/>
    <property type="match status" value="1"/>
</dbReference>
<dbReference type="InterPro" id="IPR003699">
    <property type="entry name" value="QueA"/>
</dbReference>
<dbReference type="InterPro" id="IPR042118">
    <property type="entry name" value="QueA_dom1"/>
</dbReference>
<dbReference type="InterPro" id="IPR042119">
    <property type="entry name" value="QueA_dom2"/>
</dbReference>
<dbReference type="InterPro" id="IPR036100">
    <property type="entry name" value="QueA_sf"/>
</dbReference>
<dbReference type="NCBIfam" id="NF001140">
    <property type="entry name" value="PRK00147.1"/>
    <property type="match status" value="1"/>
</dbReference>
<dbReference type="NCBIfam" id="TIGR00113">
    <property type="entry name" value="queA"/>
    <property type="match status" value="1"/>
</dbReference>
<dbReference type="PANTHER" id="PTHR30307">
    <property type="entry name" value="S-ADENOSYLMETHIONINE:TRNA RIBOSYLTRANSFERASE-ISOMERASE"/>
    <property type="match status" value="1"/>
</dbReference>
<dbReference type="PANTHER" id="PTHR30307:SF0">
    <property type="entry name" value="S-ADENOSYLMETHIONINE:TRNA RIBOSYLTRANSFERASE-ISOMERASE"/>
    <property type="match status" value="1"/>
</dbReference>
<dbReference type="Pfam" id="PF02547">
    <property type="entry name" value="Queuosine_synth"/>
    <property type="match status" value="1"/>
</dbReference>
<dbReference type="SUPFAM" id="SSF111337">
    <property type="entry name" value="QueA-like"/>
    <property type="match status" value="1"/>
</dbReference>
<keyword id="KW-0963">Cytoplasm</keyword>
<keyword id="KW-0671">Queuosine biosynthesis</keyword>
<keyword id="KW-1185">Reference proteome</keyword>
<keyword id="KW-0949">S-adenosyl-L-methionine</keyword>
<keyword id="KW-0808">Transferase</keyword>
<proteinExistence type="inferred from homology"/>
<organism>
    <name type="scientific">Geobacter metallireducens (strain ATCC 53774 / DSM 7210 / GS-15)</name>
    <dbReference type="NCBI Taxonomy" id="269799"/>
    <lineage>
        <taxon>Bacteria</taxon>
        <taxon>Pseudomonadati</taxon>
        <taxon>Thermodesulfobacteriota</taxon>
        <taxon>Desulfuromonadia</taxon>
        <taxon>Geobacterales</taxon>
        <taxon>Geobacteraceae</taxon>
        <taxon>Geobacter</taxon>
    </lineage>
</organism>
<name>QUEA_GEOMG</name>
<sequence length="343" mass="38551">MRVDDFDYELPPELIAQEPLDRRDATRLMTVDRLKGEVGEVSFREITRLFRPGDLLVVNDTRVIPARFFGVKESGGRVEVFLERRLAAVGERWQCLLRSSKPSRPGTRIVLAEGVSAEVIGRSDGDTWCVSFTPVTGFDEWLERNGAMPLPPYIRRSAADADRERYQTVFSRQRGAVAAPTAGLHFTPELLDELRERGVEIATLTLHVGLGTFMPIRVERVEEHRMHRERYIIPSATADAVNARKGGKGRVIALGTTTCRTLEHAARDDGRVAAGAGETGIFIYPGYHFKTVDALITNFHLPKSTLLMLVSAFAGKELLFRAYHEAVTRRFRFFSYGDAMFVH</sequence>
<reference key="1">
    <citation type="journal article" date="2009" name="BMC Microbiol.">
        <title>The genome sequence of Geobacter metallireducens: features of metabolism, physiology and regulation common and dissimilar to Geobacter sulfurreducens.</title>
        <authorList>
            <person name="Aklujkar M."/>
            <person name="Krushkal J."/>
            <person name="DiBartolo G."/>
            <person name="Lapidus A."/>
            <person name="Land M.L."/>
            <person name="Lovley D.R."/>
        </authorList>
    </citation>
    <scope>NUCLEOTIDE SEQUENCE [LARGE SCALE GENOMIC DNA]</scope>
    <source>
        <strain>ATCC 53774 / DSM 7210 / GS-15</strain>
    </source>
</reference>
<accession>Q39XD1</accession>
<gene>
    <name evidence="1" type="primary">queA</name>
    <name type="ordered locus">Gmet_0851</name>
</gene>
<feature type="chain" id="PRO_0000231339" description="S-adenosylmethionine:tRNA ribosyltransferase-isomerase">
    <location>
        <begin position="1"/>
        <end position="343"/>
    </location>
</feature>
<protein>
    <recommendedName>
        <fullName evidence="1">S-adenosylmethionine:tRNA ribosyltransferase-isomerase</fullName>
        <ecNumber evidence="1">2.4.99.17</ecNumber>
    </recommendedName>
    <alternativeName>
        <fullName evidence="1">Queuosine biosynthesis protein QueA</fullName>
    </alternativeName>
</protein>
<comment type="function">
    <text evidence="1">Transfers and isomerizes the ribose moiety from AdoMet to the 7-aminomethyl group of 7-deazaguanine (preQ1-tRNA) to give epoxyqueuosine (oQ-tRNA).</text>
</comment>
<comment type="catalytic activity">
    <reaction evidence="1">
        <text>7-aminomethyl-7-carbaguanosine(34) in tRNA + S-adenosyl-L-methionine = epoxyqueuosine(34) in tRNA + adenine + L-methionine + 2 H(+)</text>
        <dbReference type="Rhea" id="RHEA:32155"/>
        <dbReference type="Rhea" id="RHEA-COMP:10342"/>
        <dbReference type="Rhea" id="RHEA-COMP:18582"/>
        <dbReference type="ChEBI" id="CHEBI:15378"/>
        <dbReference type="ChEBI" id="CHEBI:16708"/>
        <dbReference type="ChEBI" id="CHEBI:57844"/>
        <dbReference type="ChEBI" id="CHEBI:59789"/>
        <dbReference type="ChEBI" id="CHEBI:82833"/>
        <dbReference type="ChEBI" id="CHEBI:194443"/>
        <dbReference type="EC" id="2.4.99.17"/>
    </reaction>
</comment>
<comment type="pathway">
    <text evidence="1">tRNA modification; tRNA-queuosine biosynthesis.</text>
</comment>
<comment type="subunit">
    <text evidence="1">Monomer.</text>
</comment>
<comment type="subcellular location">
    <subcellularLocation>
        <location evidence="1">Cytoplasm</location>
    </subcellularLocation>
</comment>
<comment type="similarity">
    <text evidence="1">Belongs to the QueA family.</text>
</comment>
<evidence type="ECO:0000255" key="1">
    <source>
        <dbReference type="HAMAP-Rule" id="MF_00113"/>
    </source>
</evidence>